<dbReference type="EC" id="3.1.4.35"/>
<dbReference type="EMBL" id="CH480815">
    <property type="protein sequence ID" value="EDW42181.1"/>
    <property type="molecule type" value="Genomic_DNA"/>
</dbReference>
<dbReference type="RefSeq" id="XP_002031195.1">
    <property type="nucleotide sequence ID" value="XM_002031159.1"/>
</dbReference>
<dbReference type="SMR" id="B4HEM4"/>
<dbReference type="STRING" id="7238.B4HEM4"/>
<dbReference type="EnsemblMetazoa" id="FBtr0208833">
    <property type="protein sequence ID" value="FBpp0207325"/>
    <property type="gene ID" value="FBgn0180704"/>
</dbReference>
<dbReference type="EnsemblMetazoa" id="XM_032720263.1">
    <property type="protein sequence ID" value="XP_032576154.1"/>
    <property type="gene ID" value="LOC6606390"/>
</dbReference>
<dbReference type="HOGENOM" id="CLU_006980_0_2_1"/>
<dbReference type="OMA" id="FHIPYEV"/>
<dbReference type="PhylomeDB" id="B4HEM4"/>
<dbReference type="ChiTaRS" id="Pde6">
    <property type="organism name" value="fly"/>
</dbReference>
<dbReference type="Proteomes" id="UP000001292">
    <property type="component" value="Unassembled WGS sequence"/>
</dbReference>
<dbReference type="GO" id="GO:0016020">
    <property type="term" value="C:membrane"/>
    <property type="evidence" value="ECO:0000250"/>
    <property type="project" value="UniProtKB"/>
</dbReference>
<dbReference type="GO" id="GO:0005886">
    <property type="term" value="C:plasma membrane"/>
    <property type="evidence" value="ECO:0007669"/>
    <property type="project" value="UniProtKB-SubCell"/>
</dbReference>
<dbReference type="GO" id="GO:0047555">
    <property type="term" value="F:3',5'-cyclic-GMP phosphodiesterase activity"/>
    <property type="evidence" value="ECO:0000250"/>
    <property type="project" value="UniProtKB"/>
</dbReference>
<dbReference type="GO" id="GO:0046872">
    <property type="term" value="F:metal ion binding"/>
    <property type="evidence" value="ECO:0007669"/>
    <property type="project" value="UniProtKB-KW"/>
</dbReference>
<dbReference type="GO" id="GO:0046068">
    <property type="term" value="P:cGMP metabolic process"/>
    <property type="evidence" value="ECO:0000250"/>
    <property type="project" value="UniProtKB"/>
</dbReference>
<dbReference type="GO" id="GO:0007165">
    <property type="term" value="P:signal transduction"/>
    <property type="evidence" value="ECO:0007669"/>
    <property type="project" value="InterPro"/>
</dbReference>
<dbReference type="CDD" id="cd00077">
    <property type="entry name" value="HDc"/>
    <property type="match status" value="1"/>
</dbReference>
<dbReference type="FunFam" id="1.10.1300.10:FF:000040">
    <property type="entry name" value="cGMP-specific 3',5'-cyclic phosphodiesterase"/>
    <property type="match status" value="1"/>
</dbReference>
<dbReference type="FunFam" id="3.30.450.40:FF:000031">
    <property type="entry name" value="Phosphodiesterase"/>
    <property type="match status" value="1"/>
</dbReference>
<dbReference type="Gene3D" id="3.30.450.40">
    <property type="match status" value="2"/>
</dbReference>
<dbReference type="Gene3D" id="1.10.1300.10">
    <property type="entry name" value="3'5'-cyclic nucleotide phosphodiesterase, catalytic domain"/>
    <property type="match status" value="1"/>
</dbReference>
<dbReference type="InterPro" id="IPR003018">
    <property type="entry name" value="GAF"/>
</dbReference>
<dbReference type="InterPro" id="IPR029016">
    <property type="entry name" value="GAF-like_dom_sf"/>
</dbReference>
<dbReference type="InterPro" id="IPR003607">
    <property type="entry name" value="HD/PDEase_dom"/>
</dbReference>
<dbReference type="InterPro" id="IPR023088">
    <property type="entry name" value="PDEase"/>
</dbReference>
<dbReference type="InterPro" id="IPR002073">
    <property type="entry name" value="PDEase_catalytic_dom"/>
</dbReference>
<dbReference type="InterPro" id="IPR036971">
    <property type="entry name" value="PDEase_catalytic_dom_sf"/>
</dbReference>
<dbReference type="InterPro" id="IPR023174">
    <property type="entry name" value="PDEase_CS"/>
</dbReference>
<dbReference type="PANTHER" id="PTHR11347">
    <property type="entry name" value="CYCLIC NUCLEOTIDE PHOSPHODIESTERASE"/>
    <property type="match status" value="1"/>
</dbReference>
<dbReference type="Pfam" id="PF01590">
    <property type="entry name" value="GAF"/>
    <property type="match status" value="2"/>
</dbReference>
<dbReference type="Pfam" id="PF00233">
    <property type="entry name" value="PDEase_I"/>
    <property type="match status" value="2"/>
</dbReference>
<dbReference type="PRINTS" id="PR00387">
    <property type="entry name" value="PDIESTERASE1"/>
</dbReference>
<dbReference type="SMART" id="SM00065">
    <property type="entry name" value="GAF"/>
    <property type="match status" value="2"/>
</dbReference>
<dbReference type="SMART" id="SM00471">
    <property type="entry name" value="HDc"/>
    <property type="match status" value="1"/>
</dbReference>
<dbReference type="SUPFAM" id="SSF55781">
    <property type="entry name" value="GAF domain-like"/>
    <property type="match status" value="2"/>
</dbReference>
<dbReference type="SUPFAM" id="SSF109604">
    <property type="entry name" value="HD-domain/PDEase-like"/>
    <property type="match status" value="1"/>
</dbReference>
<dbReference type="PROSITE" id="PS00126">
    <property type="entry name" value="PDEASE_I_1"/>
    <property type="match status" value="1"/>
</dbReference>
<dbReference type="PROSITE" id="PS51845">
    <property type="entry name" value="PDEASE_I_2"/>
    <property type="match status" value="1"/>
</dbReference>
<reference evidence="6" key="1">
    <citation type="journal article" date="2007" name="Nature">
        <title>Evolution of genes and genomes on the Drosophila phylogeny.</title>
        <authorList>
            <consortium name="Drosophila 12 genomes consortium"/>
        </authorList>
    </citation>
    <scope>NUCLEOTIDE SEQUENCE [LARGE SCALE GENOMIC DNA]</scope>
    <source>
        <strain evidence="6">Rob3c / Tucson 14021-0248.25</strain>
    </source>
</reference>
<feature type="chain" id="PRO_0000363696" description="cGMP-specific 3',5'-cyclic phosphodiesterase">
    <location>
        <begin position="1"/>
        <end position="1202"/>
    </location>
</feature>
<feature type="propeptide" id="PRO_0000363697" description="Removed in mature form" evidence="2">
    <location>
        <begin position="1203"/>
        <end position="1205"/>
    </location>
</feature>
<feature type="domain" description="GAF 1" evidence="3">
    <location>
        <begin position="259"/>
        <end position="411"/>
    </location>
</feature>
<feature type="domain" description="GAF 2" evidence="3">
    <location>
        <begin position="443"/>
        <end position="624"/>
    </location>
</feature>
<feature type="domain" description="PDEase" evidence="4">
    <location>
        <begin position="654"/>
        <end position="1052"/>
    </location>
</feature>
<feature type="region of interest" description="Disordered" evidence="5">
    <location>
        <begin position="1"/>
        <end position="153"/>
    </location>
</feature>
<feature type="region of interest" description="Disordered" evidence="5">
    <location>
        <begin position="1093"/>
        <end position="1122"/>
    </location>
</feature>
<feature type="region of interest" description="Disordered" evidence="5">
    <location>
        <begin position="1152"/>
        <end position="1205"/>
    </location>
</feature>
<feature type="compositionally biased region" description="Low complexity" evidence="5">
    <location>
        <begin position="18"/>
        <end position="32"/>
    </location>
</feature>
<feature type="compositionally biased region" description="Polar residues" evidence="5">
    <location>
        <begin position="33"/>
        <end position="48"/>
    </location>
</feature>
<feature type="compositionally biased region" description="Low complexity" evidence="5">
    <location>
        <begin position="62"/>
        <end position="71"/>
    </location>
</feature>
<feature type="compositionally biased region" description="Polar residues" evidence="5">
    <location>
        <begin position="83"/>
        <end position="94"/>
    </location>
</feature>
<feature type="compositionally biased region" description="Low complexity" evidence="5">
    <location>
        <begin position="118"/>
        <end position="140"/>
    </location>
</feature>
<feature type="compositionally biased region" description="Basic and acidic residues" evidence="5">
    <location>
        <begin position="1098"/>
        <end position="1109"/>
    </location>
</feature>
<feature type="compositionally biased region" description="Basic and acidic residues" evidence="5">
    <location>
        <begin position="1152"/>
        <end position="1162"/>
    </location>
</feature>
<feature type="compositionally biased region" description="Low complexity" evidence="5">
    <location>
        <begin position="1171"/>
        <end position="1191"/>
    </location>
</feature>
<feature type="compositionally biased region" description="Basic residues" evidence="5">
    <location>
        <begin position="1195"/>
        <end position="1205"/>
    </location>
</feature>
<feature type="active site" description="Proton donor" evidence="1">
    <location>
        <position position="730"/>
    </location>
</feature>
<feature type="binding site" evidence="1">
    <location>
        <position position="734"/>
    </location>
    <ligand>
        <name>a divalent metal cation</name>
        <dbReference type="ChEBI" id="CHEBI:60240"/>
        <label>1</label>
    </ligand>
</feature>
<feature type="binding site" evidence="1">
    <location>
        <position position="770"/>
    </location>
    <ligand>
        <name>a divalent metal cation</name>
        <dbReference type="ChEBI" id="CHEBI:60240"/>
        <label>1</label>
    </ligand>
</feature>
<feature type="binding site" evidence="1">
    <location>
        <position position="771"/>
    </location>
    <ligand>
        <name>a divalent metal cation</name>
        <dbReference type="ChEBI" id="CHEBI:60240"/>
        <label>1</label>
    </ligand>
</feature>
<feature type="binding site" evidence="1">
    <location>
        <position position="771"/>
    </location>
    <ligand>
        <name>a divalent metal cation</name>
        <dbReference type="ChEBI" id="CHEBI:60240"/>
        <label>2</label>
    </ligand>
</feature>
<feature type="binding site" evidence="1">
    <location>
        <position position="956"/>
    </location>
    <ligand>
        <name>a divalent metal cation</name>
        <dbReference type="ChEBI" id="CHEBI:60240"/>
        <label>1</label>
    </ligand>
</feature>
<feature type="modified residue" description="Cysteine methyl ester" evidence="2">
    <location>
        <position position="1202"/>
    </location>
</feature>
<feature type="lipid moiety-binding region" description="S-farnesyl cysteine" evidence="2">
    <location>
        <position position="1202"/>
    </location>
</feature>
<keyword id="KW-1003">Cell membrane</keyword>
<keyword id="KW-0140">cGMP</keyword>
<keyword id="KW-0378">Hydrolase</keyword>
<keyword id="KW-0449">Lipoprotein</keyword>
<keyword id="KW-0472">Membrane</keyword>
<keyword id="KW-0479">Metal-binding</keyword>
<keyword id="KW-0488">Methylation</keyword>
<keyword id="KW-0636">Prenylation</keyword>
<keyword id="KW-1185">Reference proteome</keyword>
<keyword id="KW-0677">Repeat</keyword>
<sequence length="1205" mass="133207">MTDVSSPAGGAASPVEMTTSSSPAATTSASSSKPLTNGANKTTISTTAGGVAPGDVPGTGSGAIPASSSSGNQVKLEHHHRQSNNNRPAATNRSSETKLRSPAGESDGASRLMTPAGSSSSPSQSPSQTQASIQTQTSQQDRLTKASTTASQQDVDEVARLFEEKPEAFEKWLTERAPPEALSRLQEFIENRKPHKRPSVTSDLFQQWMAASPTVQQKSPRSLSNSSASSLPECRRHLMDLDEGELFMELIRDVANELDIDVLCHKILVNVGLLTHADRGSLFLAKGTPTNKYLVAKLFDVTQKTALKDAVARASAEEIIIPFGIGIAGMVAQTKQMINIKEAYKDARFNCEIDLKTGYKTNAILCMPICNYEGDIIGVAQIINKTNGCMEFDEHDVEIFRRYLTFCGIGIQNAQLFEMSVQEYRRNQILLNLARSIFEEQNNLECLVTKIMTEARELLKCERCSVFLVDLDCCEASHLEKIIEKPNQPATRAIKSADSFEEKKMRNRFTVLFELGGEYQAANVSRPSVSELSSSTLAQIAQFVATTGQTVNICDVIEWVRDHNQIRAEDEIDSTQAILCMPIMNAQKKVIGVAQLINKANGVPFTDSDASIFEAFAIFCGLGIHNTQMYENACKLMAKQKVALECLSYHATASQDQTEKLTQDVIAEAESYNLYSFTFTDFELVDDDTCRAVLRMFMQCNLVSQFQIPYDVLCRWVLSVRKNYRPVKYHNWRHALNVAQTMFAMLKTGKMERFMTDLEILGLLVACLCHDLDHRGTNNAFQTKTESPLAILYTTSTMEHHHFDQCVMILNSEGNNIFQTGFAGLGAGTFGSGRGTGGGSNSNFPGDRVLQIARRTIFFFVPELDAEDDVVDSVVDSVVELSVVVLVLDSVLVAALSPEDYRSVMKTVESAILSTDLAMYFKKRNAFLELVENGEFDWQGEEKKDLLCGMMMTACDVSAIAKPWEVQHKVAKLVADEFFDQGDLEKLQLNTQPVAMMDRERKDELPKMQVGFIDVICLPLYRVLCDTFPWITPLYEGTLENRRNWQDLAEKVEMGLTWIDHDTIDKPVEEFAACADEEIKDIEFTVTTLNCNQQSQHGSEDSHTPEHQRSGSRLSMKKTGALGKAVRSKLSKTLYNSMDGSKPKTSLKLLESHVSEDMDDKSPTSPSQPQASGSMGRMSASSSTSSAGGQMVDKSKKRSKLCALL</sequence>
<name>PDE6_DROSE</name>
<protein>
    <recommendedName>
        <fullName evidence="2">cGMP-specific 3',5'-cyclic phosphodiesterase</fullName>
        <ecNumber>3.1.4.35</ecNumber>
    </recommendedName>
</protein>
<evidence type="ECO:0000250" key="1"/>
<evidence type="ECO:0000250" key="2">
    <source>
        <dbReference type="UniProtKB" id="Q9VFI9"/>
    </source>
</evidence>
<evidence type="ECO:0000255" key="3"/>
<evidence type="ECO:0000255" key="4">
    <source>
        <dbReference type="PROSITE-ProRule" id="PRU01192"/>
    </source>
</evidence>
<evidence type="ECO:0000256" key="5">
    <source>
        <dbReference type="SAM" id="MobiDB-lite"/>
    </source>
</evidence>
<evidence type="ECO:0000312" key="6">
    <source>
        <dbReference type="EMBL" id="EDW42181.1"/>
    </source>
</evidence>
<comment type="function">
    <text evidence="2">Has a role regulating cGMP transport in Malpighian tubule principal cells.</text>
</comment>
<comment type="catalytic activity">
    <reaction evidence="2">
        <text>3',5'-cyclic GMP + H2O = GMP + H(+)</text>
        <dbReference type="Rhea" id="RHEA:16957"/>
        <dbReference type="ChEBI" id="CHEBI:15377"/>
        <dbReference type="ChEBI" id="CHEBI:15378"/>
        <dbReference type="ChEBI" id="CHEBI:57746"/>
        <dbReference type="ChEBI" id="CHEBI:58115"/>
        <dbReference type="EC" id="3.1.4.35"/>
    </reaction>
</comment>
<comment type="cofactor">
    <cofactor evidence="1">
        <name>a divalent metal cation</name>
        <dbReference type="ChEBI" id="CHEBI:60240"/>
    </cofactor>
    <text evidence="1">Binds 2 divalent metal cations per subunit. Site 1 may preferentially bind zinc ions, while site 2 has a preference for magnesium and/or manganese ions.</text>
</comment>
<comment type="subunit">
    <text evidence="2">Interacts with PrBP.</text>
</comment>
<comment type="subcellular location">
    <subcellularLocation>
        <location evidence="2">Cell membrane</location>
        <topology evidence="2">Lipid-anchor</topology>
        <orientation evidence="2">Cytoplasmic side</orientation>
    </subcellularLocation>
</comment>
<comment type="similarity">
    <text evidence="3">Belongs to the cyclic nucleotide phosphodiesterase family.</text>
</comment>
<organism>
    <name type="scientific">Drosophila sechellia</name>
    <name type="common">Fruit fly</name>
    <dbReference type="NCBI Taxonomy" id="7238"/>
    <lineage>
        <taxon>Eukaryota</taxon>
        <taxon>Metazoa</taxon>
        <taxon>Ecdysozoa</taxon>
        <taxon>Arthropoda</taxon>
        <taxon>Hexapoda</taxon>
        <taxon>Insecta</taxon>
        <taxon>Pterygota</taxon>
        <taxon>Neoptera</taxon>
        <taxon>Endopterygota</taxon>
        <taxon>Diptera</taxon>
        <taxon>Brachycera</taxon>
        <taxon>Muscomorpha</taxon>
        <taxon>Ephydroidea</taxon>
        <taxon>Drosophilidae</taxon>
        <taxon>Drosophila</taxon>
        <taxon>Sophophora</taxon>
    </lineage>
</organism>
<gene>
    <name evidence="2" type="primary">Pde6</name>
    <name type="ORF">GM25848</name>
</gene>
<proteinExistence type="inferred from homology"/>
<accession>B4HEM4</accession>